<organism>
    <name type="scientific">Homo sapiens</name>
    <name type="common">Human</name>
    <dbReference type="NCBI Taxonomy" id="9606"/>
    <lineage>
        <taxon>Eukaryota</taxon>
        <taxon>Metazoa</taxon>
        <taxon>Chordata</taxon>
        <taxon>Craniata</taxon>
        <taxon>Vertebrata</taxon>
        <taxon>Euteleostomi</taxon>
        <taxon>Mammalia</taxon>
        <taxon>Eutheria</taxon>
        <taxon>Euarchontoglires</taxon>
        <taxon>Primates</taxon>
        <taxon>Haplorrhini</taxon>
        <taxon>Catarrhini</taxon>
        <taxon>Hominidae</taxon>
        <taxon>Homo</taxon>
    </lineage>
</organism>
<comment type="function">
    <text evidence="5 6 7 8">V region of the variable domain of immunoglobulin light chains that participates in the antigen recognition (PubMed:24600447). Immunoglobulins, also known as antibodies, are membrane-bound or secreted glycoproteins produced by B lymphocytes. In the recognition phase of humoral immunity, the membrane-bound immunoglobulins serve as receptors which, upon binding of a specific antigen, trigger the clonal expansion and differentiation of B lymphocytes into immunoglobulins-secreting plasma cells. Secreted immunoglobulins mediate the effector phase of humoral immunity, which results in the elimination of bound antigens (PubMed:20176268, PubMed:22158414). The antigen binding site is formed by the variable domain of one heavy chain, together with that of its associated light chain. Thus, each immunoglobulin has two antigen binding sites with remarkable affinity for a particular antigen. The variable domains are assembled by a process called V-(D)-J rearrangement and can then be subjected to somatic hypermutations which, after exposure to antigen and selection, allow affinity maturation for a particular antigen (PubMed:17576170, PubMed:20176268).</text>
</comment>
<comment type="subunit">
    <text evidence="6">Immunoglobulins are composed of two identical heavy chains and two identical light chains; disulfide-linked.</text>
</comment>
<comment type="subcellular location">
    <subcellularLocation>
        <location evidence="6 7">Secreted</location>
    </subcellularLocation>
    <subcellularLocation>
        <location evidence="6 7">Cell membrane</location>
    </subcellularLocation>
</comment>
<comment type="polymorphism">
    <text>There are several alleles. The sequence shown is that of IMGT allele IGKV1-12*01 and IMGT allele IGKV1-12*02.</text>
</comment>
<comment type="caution">
    <text evidence="10">For an example of a full-length immunoglobulin kappa light chain see AC P0DOX7.</text>
</comment>
<proteinExistence type="inferred from homology"/>
<sequence length="117" mass="12645">MDMRVPAQLLGLLLLWFPGSRCDIQMTQSPSSVSASVGDRVTITCRASQGISSWLAWYQQKPGKAPKLLIYAASSLQSGVPSRFSGSGSGTDFTLTISSLQPEDFATYYCQQANSFP</sequence>
<reference key="1">
    <citation type="journal article" date="2005" name="Nature">
        <title>Generation and annotation of the DNA sequences of human chromosomes 2 and 4.</title>
        <authorList>
            <person name="Hillier L.W."/>
            <person name="Graves T.A."/>
            <person name="Fulton R.S."/>
            <person name="Fulton L.A."/>
            <person name="Pepin K.H."/>
            <person name="Minx P."/>
            <person name="Wagner-McPherson C."/>
            <person name="Layman D."/>
            <person name="Wylie K."/>
            <person name="Sekhon M."/>
            <person name="Becker M.C."/>
            <person name="Fewell G.A."/>
            <person name="Delehaunty K.D."/>
            <person name="Miner T.L."/>
            <person name="Nash W.E."/>
            <person name="Kremitzki C."/>
            <person name="Oddy L."/>
            <person name="Du H."/>
            <person name="Sun H."/>
            <person name="Bradshaw-Cordum H."/>
            <person name="Ali J."/>
            <person name="Carter J."/>
            <person name="Cordes M."/>
            <person name="Harris A."/>
            <person name="Isak A."/>
            <person name="van Brunt A."/>
            <person name="Nguyen C."/>
            <person name="Du F."/>
            <person name="Courtney L."/>
            <person name="Kalicki J."/>
            <person name="Ozersky P."/>
            <person name="Abbott S."/>
            <person name="Armstrong J."/>
            <person name="Belter E.A."/>
            <person name="Caruso L."/>
            <person name="Cedroni M."/>
            <person name="Cotton M."/>
            <person name="Davidson T."/>
            <person name="Desai A."/>
            <person name="Elliott G."/>
            <person name="Erb T."/>
            <person name="Fronick C."/>
            <person name="Gaige T."/>
            <person name="Haakenson W."/>
            <person name="Haglund K."/>
            <person name="Holmes A."/>
            <person name="Harkins R."/>
            <person name="Kim K."/>
            <person name="Kruchowski S.S."/>
            <person name="Strong C.M."/>
            <person name="Grewal N."/>
            <person name="Goyea E."/>
            <person name="Hou S."/>
            <person name="Levy A."/>
            <person name="Martinka S."/>
            <person name="Mead K."/>
            <person name="McLellan M.D."/>
            <person name="Meyer R."/>
            <person name="Randall-Maher J."/>
            <person name="Tomlinson C."/>
            <person name="Dauphin-Kohlberg S."/>
            <person name="Kozlowicz-Reilly A."/>
            <person name="Shah N."/>
            <person name="Swearengen-Shahid S."/>
            <person name="Snider J."/>
            <person name="Strong J.T."/>
            <person name="Thompson J."/>
            <person name="Yoakum M."/>
            <person name="Leonard S."/>
            <person name="Pearman C."/>
            <person name="Trani L."/>
            <person name="Radionenko M."/>
            <person name="Waligorski J.E."/>
            <person name="Wang C."/>
            <person name="Rock S.M."/>
            <person name="Tin-Wollam A.-M."/>
            <person name="Maupin R."/>
            <person name="Latreille P."/>
            <person name="Wendl M.C."/>
            <person name="Yang S.-P."/>
            <person name="Pohl C."/>
            <person name="Wallis J.W."/>
            <person name="Spieth J."/>
            <person name="Bieri T.A."/>
            <person name="Berkowicz N."/>
            <person name="Nelson J.O."/>
            <person name="Osborne J."/>
            <person name="Ding L."/>
            <person name="Meyer R."/>
            <person name="Sabo A."/>
            <person name="Shotland Y."/>
            <person name="Sinha P."/>
            <person name="Wohldmann P.E."/>
            <person name="Cook L.L."/>
            <person name="Hickenbotham M.T."/>
            <person name="Eldred J."/>
            <person name="Williams D."/>
            <person name="Jones T.A."/>
            <person name="She X."/>
            <person name="Ciccarelli F.D."/>
            <person name="Izaurralde E."/>
            <person name="Taylor J."/>
            <person name="Schmutz J."/>
            <person name="Myers R.M."/>
            <person name="Cox D.R."/>
            <person name="Huang X."/>
            <person name="McPherson J.D."/>
            <person name="Mardis E.R."/>
            <person name="Clifton S.W."/>
            <person name="Warren W.C."/>
            <person name="Chinwalla A.T."/>
            <person name="Eddy S.R."/>
            <person name="Marra M.A."/>
            <person name="Ovcharenko I."/>
            <person name="Furey T.S."/>
            <person name="Miller W."/>
            <person name="Eichler E.E."/>
            <person name="Bork P."/>
            <person name="Suyama M."/>
            <person name="Torrents D."/>
            <person name="Waterston R.H."/>
            <person name="Wilson R.K."/>
        </authorList>
    </citation>
    <scope>NUCLEOTIDE SEQUENCE [LARGE SCALE GENOMIC DNA] (IMGT ALLELE IGKV1-12*01 AND IMGT ALLELE IGKV1-12*02)</scope>
</reference>
<reference key="2">
    <citation type="journal article" date="2001" name="Exp. Clin. Immunogenet.">
        <title>Nomenclature of the human immunoglobulin kappa (IGK) genes.</title>
        <authorList>
            <person name="Lefranc M.P."/>
        </authorList>
    </citation>
    <scope>NOMEMCLATURE</scope>
</reference>
<reference key="3">
    <citation type="book" date="2001" name="The Immunoglobulin FactsBook.">
        <title>The Immunoglobulin FactsBook.</title>
        <editorList>
            <person name="Lefranc M.P."/>
            <person name="Lefranc G."/>
        </editorList>
        <authorList>
            <person name="Lefranc M.P."/>
            <person name="Lefranc G."/>
        </authorList>
    </citation>
    <scope>NOMENCLATURE</scope>
</reference>
<reference key="4">
    <citation type="journal article" date="2007" name="Annu. Rev. Genet.">
        <title>Immunoglobulin somatic hypermutation.</title>
        <authorList>
            <person name="Teng G."/>
            <person name="Papavasiliou F.N."/>
        </authorList>
    </citation>
    <scope>REVIEW ON SOMATIC HYPERMUTATION</scope>
</reference>
<reference key="5">
    <citation type="journal article" date="2010" name="J. Allergy Clin. Immunol.">
        <title>Structure and function of immunoglobulins.</title>
        <authorList>
            <person name="Schroeder H.W. Jr."/>
            <person name="Cavacini L."/>
        </authorList>
    </citation>
    <scope>REVIEW ON IMMUNOGLOBULINS</scope>
</reference>
<reference key="6">
    <citation type="journal article" date="2012" name="Nat. Rev. Immunol.">
        <title>Molecular programming of B cell memory.</title>
        <authorList>
            <person name="McHeyzer-Williams M."/>
            <person name="Okitsu S."/>
            <person name="Wang N."/>
            <person name="McHeyzer-Williams L."/>
        </authorList>
    </citation>
    <scope>REVIEW ON FUNCTION</scope>
</reference>
<reference key="7">
    <citation type="journal article" date="2014" name="Front. Immunol.">
        <title>Immunoglobulin and T Cell Receptor Genes: IMGT((R)) and the Birth and Rise of Immunoinformatics.</title>
        <authorList>
            <person name="Lefranc M.P."/>
        </authorList>
    </citation>
    <scope>NOMENCLATURE</scope>
</reference>
<dbReference type="EMBL" id="AC245015">
    <property type="status" value="NOT_ANNOTATED_CDS"/>
    <property type="molecule type" value="Genomic_DNA"/>
</dbReference>
<dbReference type="SMR" id="A0A0C4DH73"/>
<dbReference type="FunCoup" id="A0A0C4DH73">
    <property type="interactions" value="377"/>
</dbReference>
<dbReference type="IMGT_GENE-DB" id="IGKV1-12"/>
<dbReference type="BioMuta" id="IGKV1-12"/>
<dbReference type="jPOST" id="A0A0C4DH73"/>
<dbReference type="MassIVE" id="A0A0C4DH73"/>
<dbReference type="Ensembl" id="ENST00000480492.1">
    <property type="protein sequence ID" value="ENSP00000420576.1"/>
    <property type="gene ID" value="ENSG00000243290.3"/>
</dbReference>
<dbReference type="Ensembl" id="ENST00000632502.1">
    <property type="protein sequence ID" value="ENSP00000488148.1"/>
    <property type="gene ID" value="ENSG00000282694.3"/>
</dbReference>
<dbReference type="AGR" id="HGNC:5730"/>
<dbReference type="GeneCards" id="IGKV1-12"/>
<dbReference type="HGNC" id="HGNC:5730">
    <property type="gene designation" value="IGKV1-12"/>
</dbReference>
<dbReference type="HPA" id="ENSG00000243290">
    <property type="expression patterns" value="Tissue enhanced (intestine, lymphoid tissue)"/>
</dbReference>
<dbReference type="neXtProt" id="NX_A0A0C4DH73"/>
<dbReference type="OpenTargets" id="ENSG00000243290"/>
<dbReference type="VEuPathDB" id="HostDB:ENSG00000243290"/>
<dbReference type="GeneTree" id="ENSGT00940000153048"/>
<dbReference type="HOGENOM" id="CLU_077975_4_1_1"/>
<dbReference type="InParanoid" id="A0A0C4DH73"/>
<dbReference type="OMA" id="KCKASEG"/>
<dbReference type="PAN-GO" id="A0A0C4DH73">
    <property type="GO annotations" value="3 GO annotations based on evolutionary models"/>
</dbReference>
<dbReference type="PhylomeDB" id="A0A0C4DH73"/>
<dbReference type="PathwayCommons" id="A0A0C4DH73"/>
<dbReference type="Reactome" id="R-HSA-166663">
    <property type="pathway name" value="Initial triggering of complement"/>
</dbReference>
<dbReference type="Reactome" id="R-HSA-173623">
    <property type="pathway name" value="Classical antibody-mediated complement activation"/>
</dbReference>
<dbReference type="Reactome" id="R-HSA-198933">
    <property type="pathway name" value="Immunoregulatory interactions between a Lymphoid and a non-Lymphoid cell"/>
</dbReference>
<dbReference type="Reactome" id="R-HSA-202733">
    <property type="pathway name" value="Cell surface interactions at the vascular wall"/>
</dbReference>
<dbReference type="Reactome" id="R-HSA-2029481">
    <property type="pathway name" value="FCGR activation"/>
</dbReference>
<dbReference type="Reactome" id="R-HSA-2029482">
    <property type="pathway name" value="Regulation of actin dynamics for phagocytic cup formation"/>
</dbReference>
<dbReference type="Reactome" id="R-HSA-2029485">
    <property type="pathway name" value="Role of phospholipids in phagocytosis"/>
</dbReference>
<dbReference type="Reactome" id="R-HSA-2168880">
    <property type="pathway name" value="Scavenging of heme from plasma"/>
</dbReference>
<dbReference type="Reactome" id="R-HSA-2454202">
    <property type="pathway name" value="Fc epsilon receptor (FCERI) signaling"/>
</dbReference>
<dbReference type="Reactome" id="R-HSA-2730905">
    <property type="pathway name" value="Role of LAT2/NTAL/LAB on calcium mobilization"/>
</dbReference>
<dbReference type="Reactome" id="R-HSA-2871796">
    <property type="pathway name" value="FCERI mediated MAPK activation"/>
</dbReference>
<dbReference type="Reactome" id="R-HSA-2871809">
    <property type="pathway name" value="FCERI mediated Ca+2 mobilization"/>
</dbReference>
<dbReference type="Reactome" id="R-HSA-2871837">
    <property type="pathway name" value="FCERI mediated NF-kB activation"/>
</dbReference>
<dbReference type="Reactome" id="R-HSA-5690714">
    <property type="pathway name" value="CD22 mediated BCR regulation"/>
</dbReference>
<dbReference type="Reactome" id="R-HSA-9664323">
    <property type="pathway name" value="FCGR3A-mediated IL10 synthesis"/>
</dbReference>
<dbReference type="Reactome" id="R-HSA-9664422">
    <property type="pathway name" value="FCGR3A-mediated phagocytosis"/>
</dbReference>
<dbReference type="Reactome" id="R-HSA-9679191">
    <property type="pathway name" value="Potential therapeutics for SARS"/>
</dbReference>
<dbReference type="Reactome" id="R-HSA-977606">
    <property type="pathway name" value="Regulation of Complement cascade"/>
</dbReference>
<dbReference type="Reactome" id="R-HSA-983695">
    <property type="pathway name" value="Antigen activates B Cell Receptor (BCR) leading to generation of second messengers"/>
</dbReference>
<dbReference type="Pharos" id="A0A0C4DH73">
    <property type="development level" value="Tdark"/>
</dbReference>
<dbReference type="PRO" id="PR:A0A0C4DH73"/>
<dbReference type="Proteomes" id="UP000005640">
    <property type="component" value="Chromosome 2"/>
</dbReference>
<dbReference type="RNAct" id="A0A0C4DH73">
    <property type="molecule type" value="protein"/>
</dbReference>
<dbReference type="Bgee" id="ENSG00000243290">
    <property type="expression patterns" value="Expressed in rectum and 87 other cell types or tissues"/>
</dbReference>
<dbReference type="GO" id="GO:0005576">
    <property type="term" value="C:extracellular region"/>
    <property type="evidence" value="ECO:0000304"/>
    <property type="project" value="Reactome"/>
</dbReference>
<dbReference type="GO" id="GO:0019814">
    <property type="term" value="C:immunoglobulin complex"/>
    <property type="evidence" value="ECO:0000318"/>
    <property type="project" value="GO_Central"/>
</dbReference>
<dbReference type="GO" id="GO:0005886">
    <property type="term" value="C:plasma membrane"/>
    <property type="evidence" value="ECO:0000304"/>
    <property type="project" value="Reactome"/>
</dbReference>
<dbReference type="GO" id="GO:0002250">
    <property type="term" value="P:adaptive immune response"/>
    <property type="evidence" value="ECO:0007669"/>
    <property type="project" value="UniProtKB-KW"/>
</dbReference>
<dbReference type="GO" id="GO:0006955">
    <property type="term" value="P:immune response"/>
    <property type="evidence" value="ECO:0000318"/>
    <property type="project" value="GO_Central"/>
</dbReference>
<dbReference type="CDD" id="cd04980">
    <property type="entry name" value="IgV_L_kappa"/>
    <property type="match status" value="1"/>
</dbReference>
<dbReference type="FunFam" id="2.60.40.10:FF:000212">
    <property type="entry name" value="Immunoglobulin kappa chain variable 12-38"/>
    <property type="match status" value="1"/>
</dbReference>
<dbReference type="Gene3D" id="2.60.40.10">
    <property type="entry name" value="Immunoglobulins"/>
    <property type="match status" value="1"/>
</dbReference>
<dbReference type="InterPro" id="IPR007110">
    <property type="entry name" value="Ig-like_dom"/>
</dbReference>
<dbReference type="InterPro" id="IPR036179">
    <property type="entry name" value="Ig-like_dom_sf"/>
</dbReference>
<dbReference type="InterPro" id="IPR013783">
    <property type="entry name" value="Ig-like_fold"/>
</dbReference>
<dbReference type="InterPro" id="IPR003599">
    <property type="entry name" value="Ig_sub"/>
</dbReference>
<dbReference type="InterPro" id="IPR013106">
    <property type="entry name" value="Ig_V-set"/>
</dbReference>
<dbReference type="InterPro" id="IPR050150">
    <property type="entry name" value="IgV_Light_Chain"/>
</dbReference>
<dbReference type="PANTHER" id="PTHR23267">
    <property type="entry name" value="IMMUNOGLOBULIN LIGHT CHAIN"/>
    <property type="match status" value="1"/>
</dbReference>
<dbReference type="Pfam" id="PF07686">
    <property type="entry name" value="V-set"/>
    <property type="match status" value="1"/>
</dbReference>
<dbReference type="SMART" id="SM00409">
    <property type="entry name" value="IG"/>
    <property type="match status" value="1"/>
</dbReference>
<dbReference type="SMART" id="SM00406">
    <property type="entry name" value="IGv"/>
    <property type="match status" value="1"/>
</dbReference>
<dbReference type="SUPFAM" id="SSF48726">
    <property type="entry name" value="Immunoglobulin"/>
    <property type="match status" value="1"/>
</dbReference>
<dbReference type="PROSITE" id="PS50835">
    <property type="entry name" value="IG_LIKE"/>
    <property type="match status" value="1"/>
</dbReference>
<protein>
    <recommendedName>
        <fullName evidence="4 9">Immunoglobulin kappa variable 1-12</fullName>
    </recommendedName>
</protein>
<evidence type="ECO:0000250" key="1">
    <source>
        <dbReference type="UniProtKB" id="P01602"/>
    </source>
</evidence>
<evidence type="ECO:0000255" key="2"/>
<evidence type="ECO:0000255" key="3">
    <source>
        <dbReference type="PROSITE-ProRule" id="PRU00114"/>
    </source>
</evidence>
<evidence type="ECO:0000303" key="4">
    <source>
    </source>
</evidence>
<evidence type="ECO:0000303" key="5">
    <source>
    </source>
</evidence>
<evidence type="ECO:0000303" key="6">
    <source>
    </source>
</evidence>
<evidence type="ECO:0000303" key="7">
    <source>
    </source>
</evidence>
<evidence type="ECO:0000303" key="8">
    <source>
    </source>
</evidence>
<evidence type="ECO:0000303" key="9">
    <source ref="3"/>
</evidence>
<evidence type="ECO:0000305" key="10"/>
<feature type="signal peptide" evidence="2">
    <location>
        <begin position="1"/>
        <end position="22"/>
    </location>
</feature>
<feature type="chain" id="PRO_5002170071" description="Immunoglobulin kappa variable 1-12" evidence="2">
    <location>
        <begin position="23"/>
        <end position="117"/>
    </location>
</feature>
<feature type="domain" description="Ig-like" evidence="3">
    <location>
        <begin position="24"/>
        <end position="117" status="greater than"/>
    </location>
</feature>
<feature type="region of interest" description="Framework-1" evidence="1">
    <location>
        <begin position="23"/>
        <end position="45"/>
    </location>
</feature>
<feature type="region of interest" description="Complementarity-determining-1" evidence="1">
    <location>
        <begin position="46"/>
        <end position="56"/>
    </location>
</feature>
<feature type="region of interest" description="Framework-2" evidence="1">
    <location>
        <begin position="57"/>
        <end position="71"/>
    </location>
</feature>
<feature type="region of interest" description="Complementarity-determining-2" evidence="1">
    <location>
        <begin position="72"/>
        <end position="78"/>
    </location>
</feature>
<feature type="region of interest" description="Framework-3" evidence="1">
    <location>
        <begin position="79"/>
        <end position="110"/>
    </location>
</feature>
<feature type="region of interest" description="Complementarity-determining-3" evidence="1">
    <location>
        <begin position="111"/>
        <end position="117" status="greater than"/>
    </location>
</feature>
<feature type="disulfide bond" evidence="3">
    <location>
        <begin position="45"/>
        <end position="110"/>
    </location>
</feature>
<feature type="non-terminal residue">
    <location>
        <position position="117"/>
    </location>
</feature>
<name>KV112_HUMAN</name>
<keyword id="KW-1064">Adaptive immunity</keyword>
<keyword id="KW-1003">Cell membrane</keyword>
<keyword id="KW-1015">Disulfide bond</keyword>
<keyword id="KW-0391">Immunity</keyword>
<keyword id="KW-1280">Immunoglobulin</keyword>
<keyword id="KW-0393">Immunoglobulin domain</keyword>
<keyword id="KW-0472">Membrane</keyword>
<keyword id="KW-1185">Reference proteome</keyword>
<keyword id="KW-0964">Secreted</keyword>
<keyword id="KW-0732">Signal</keyword>
<accession>A0A0C4DH73</accession>
<gene>
    <name evidence="4 9" type="primary">IGKV1-12</name>
</gene>